<name>ARNT_KLEP7</name>
<keyword id="KW-0997">Cell inner membrane</keyword>
<keyword id="KW-1003">Cell membrane</keyword>
<keyword id="KW-0328">Glycosyltransferase</keyword>
<keyword id="KW-0441">Lipid A biosynthesis</keyword>
<keyword id="KW-0444">Lipid biosynthesis</keyword>
<keyword id="KW-0443">Lipid metabolism</keyword>
<keyword id="KW-0448">Lipopolysaccharide biosynthesis</keyword>
<keyword id="KW-0472">Membrane</keyword>
<keyword id="KW-0808">Transferase</keyword>
<keyword id="KW-0812">Transmembrane</keyword>
<keyword id="KW-1133">Transmembrane helix</keyword>
<gene>
    <name evidence="1" type="primary">arnT</name>
    <name type="ordered locus">KPN78578_38060</name>
    <name type="ORF">KPN_03843</name>
</gene>
<protein>
    <recommendedName>
        <fullName evidence="1">Undecaprenyl phosphate-alpha-4-amino-4-deoxy-L-arabinose arabinosyl transferase</fullName>
        <ecNumber evidence="1">2.4.2.43</ecNumber>
    </recommendedName>
    <alternativeName>
        <fullName evidence="1">4-amino-4-deoxy-L-arabinose lipid A transferase</fullName>
    </alternativeName>
    <alternativeName>
        <fullName evidence="1">Lipid IV(A) 4-amino-4-deoxy-L-arabinosyltransferase</fullName>
    </alternativeName>
    <alternativeName>
        <fullName evidence="1">Undecaprenyl phosphate-alpha-L-Ara4N transferase</fullName>
    </alternativeName>
</protein>
<comment type="function">
    <text evidence="1">Catalyzes the transfer of the L-Ara4N moiety of the glycolipid undecaprenyl phosphate-alpha-L-Ara4N to lipid A. The modified arabinose is attached to lipid A and is required for resistance to polymyxin and cationic antimicrobial peptides.</text>
</comment>
<comment type="catalytic activity">
    <reaction evidence="1">
        <text>4-amino-4-deoxy-alpha-L-arabinopyranosyl di-trans,octa-cis-undecaprenyl phosphate + lipid IVA = lipid IIA + di-trans,octa-cis-undecaprenyl phosphate.</text>
        <dbReference type="EC" id="2.4.2.43"/>
    </reaction>
</comment>
<comment type="pathway">
    <text evidence="1">Lipopolysaccharide metabolism; 4-amino-4-deoxy-beta-L-arabinose-lipid A biosynthesis.</text>
</comment>
<comment type="subcellular location">
    <subcellularLocation>
        <location evidence="1">Cell inner membrane</location>
        <topology evidence="1">Multi-pass membrane protein</topology>
    </subcellularLocation>
</comment>
<comment type="similarity">
    <text evidence="1">Belongs to the glycosyltransferase 83 family.</text>
</comment>
<accession>A6TF96</accession>
<sequence>MKSIRYGVSLIALFALYYLLPLNFRLLWQPDETRYAEISREMLATGDWVVPHFLGLRYFEKPIAGYWINSIGQWLFGHNNFGVRFGSVFAITMTALLVAWLAWRIFRDKRVAIMSPVIFLTAMLVYAIGTYAVLDPMITLWLALAMCSFWGAAQAHSRSGKILGYVLLGVACGMGVMTKGFLALAVPVVGVLPWVIARKRWREVLTYGWLAVIVCTLVVLPWGLAIAQREPDFWRYFFWVEHIQRFAEKDAQHKAPFWYYIPFLIAGSLPWLALLPGALKRGWLERDEARGALYLLGWVAMPFLFFSIAKGKLPTYILPCFAPLSILMARYALEAAKTGAKALRINGMINLGVGLLGLIAVLVVSPWGFMHRPVWTKIELYKCLLAAIAFAVWALMGWLAMKDSGRRWSLAALCPLGLALLVGFAIPDRVIDSKQPQFLVDIVSESLQPSRYVLTNNVGIAGGLAWELKRSDIIMFDKQGELKYGLDWPDAQGSFVSQAGFADWLAAHRQQGPVSLVLLMDKGESMLDLPLPKPDNAYELGRVVFLQYLPQ</sequence>
<reference key="1">
    <citation type="submission" date="2006-09" db="EMBL/GenBank/DDBJ databases">
        <authorList>
            <consortium name="The Klebsiella pneumonia Genome Sequencing Project"/>
            <person name="McClelland M."/>
            <person name="Sanderson E.K."/>
            <person name="Spieth J."/>
            <person name="Clifton W.S."/>
            <person name="Latreille P."/>
            <person name="Sabo A."/>
            <person name="Pepin K."/>
            <person name="Bhonagiri V."/>
            <person name="Porwollik S."/>
            <person name="Ali J."/>
            <person name="Wilson R.K."/>
        </authorList>
    </citation>
    <scope>NUCLEOTIDE SEQUENCE [LARGE SCALE GENOMIC DNA]</scope>
    <source>
        <strain>ATCC 700721 / MGH 78578</strain>
    </source>
</reference>
<dbReference type="EC" id="2.4.2.43" evidence="1"/>
<dbReference type="EMBL" id="CP000647">
    <property type="protein sequence ID" value="ABR79230.1"/>
    <property type="molecule type" value="Genomic_DNA"/>
</dbReference>
<dbReference type="RefSeq" id="WP_015959107.1">
    <property type="nucleotide sequence ID" value="NC_009648.1"/>
</dbReference>
<dbReference type="SMR" id="A6TF96"/>
<dbReference type="STRING" id="272620.KPN_03843"/>
<dbReference type="CAZy" id="GT83">
    <property type="family name" value="Glycosyltransferase Family 83"/>
</dbReference>
<dbReference type="PaxDb" id="272620-KPN_03843"/>
<dbReference type="EnsemblBacteria" id="ABR79230">
    <property type="protein sequence ID" value="ABR79230"/>
    <property type="gene ID" value="KPN_03843"/>
</dbReference>
<dbReference type="KEGG" id="kpn:KPN_03843"/>
<dbReference type="HOGENOM" id="CLU_019200_2_1_6"/>
<dbReference type="UniPathway" id="UPA00037"/>
<dbReference type="PHI-base" id="PHI:7953"/>
<dbReference type="Proteomes" id="UP000000265">
    <property type="component" value="Chromosome"/>
</dbReference>
<dbReference type="GO" id="GO:0005886">
    <property type="term" value="C:plasma membrane"/>
    <property type="evidence" value="ECO:0007669"/>
    <property type="project" value="UniProtKB-SubCell"/>
</dbReference>
<dbReference type="GO" id="GO:0103015">
    <property type="term" value="F:4-amino-4-deoxy-L-arabinose transferase activity"/>
    <property type="evidence" value="ECO:0007669"/>
    <property type="project" value="UniProtKB-EC"/>
</dbReference>
<dbReference type="GO" id="GO:0000030">
    <property type="term" value="F:mannosyltransferase activity"/>
    <property type="evidence" value="ECO:0007669"/>
    <property type="project" value="InterPro"/>
</dbReference>
<dbReference type="GO" id="GO:0009245">
    <property type="term" value="P:lipid A biosynthetic process"/>
    <property type="evidence" value="ECO:0007669"/>
    <property type="project" value="UniProtKB-UniRule"/>
</dbReference>
<dbReference type="GO" id="GO:0009103">
    <property type="term" value="P:lipopolysaccharide biosynthetic process"/>
    <property type="evidence" value="ECO:0007669"/>
    <property type="project" value="UniProtKB-KW"/>
</dbReference>
<dbReference type="GO" id="GO:0006493">
    <property type="term" value="P:protein O-linked glycosylation"/>
    <property type="evidence" value="ECO:0007669"/>
    <property type="project" value="InterPro"/>
</dbReference>
<dbReference type="GO" id="GO:0010041">
    <property type="term" value="P:response to iron(III) ion"/>
    <property type="evidence" value="ECO:0007669"/>
    <property type="project" value="TreeGrafter"/>
</dbReference>
<dbReference type="HAMAP" id="MF_01165">
    <property type="entry name" value="ArnT_transfer"/>
    <property type="match status" value="1"/>
</dbReference>
<dbReference type="InterPro" id="IPR022839">
    <property type="entry name" value="ArnT_tfrase"/>
</dbReference>
<dbReference type="InterPro" id="IPR003342">
    <property type="entry name" value="Glyco_trans_39/83"/>
</dbReference>
<dbReference type="InterPro" id="IPR050297">
    <property type="entry name" value="LipidA_mod_glycosyltrf_83"/>
</dbReference>
<dbReference type="NCBIfam" id="NF009784">
    <property type="entry name" value="PRK13279.1"/>
    <property type="match status" value="1"/>
</dbReference>
<dbReference type="PANTHER" id="PTHR33908">
    <property type="entry name" value="MANNOSYLTRANSFERASE YKCB-RELATED"/>
    <property type="match status" value="1"/>
</dbReference>
<dbReference type="PANTHER" id="PTHR33908:SF3">
    <property type="entry name" value="UNDECAPRENYL PHOSPHATE-ALPHA-4-AMINO-4-DEOXY-L-ARABINOSE ARABINOSYL TRANSFERASE"/>
    <property type="match status" value="1"/>
</dbReference>
<dbReference type="Pfam" id="PF02366">
    <property type="entry name" value="PMT"/>
    <property type="match status" value="1"/>
</dbReference>
<evidence type="ECO:0000255" key="1">
    <source>
        <dbReference type="HAMAP-Rule" id="MF_01165"/>
    </source>
</evidence>
<feature type="chain" id="PRO_1000065666" description="Undecaprenyl phosphate-alpha-4-amino-4-deoxy-L-arabinose arabinosyl transferase">
    <location>
        <begin position="1"/>
        <end position="551"/>
    </location>
</feature>
<feature type="transmembrane region" description="Helical" evidence="1">
    <location>
        <begin position="8"/>
        <end position="28"/>
    </location>
</feature>
<feature type="transmembrane region" description="Helical" evidence="1">
    <location>
        <begin position="85"/>
        <end position="105"/>
    </location>
</feature>
<feature type="transmembrane region" description="Helical" evidence="1">
    <location>
        <begin position="111"/>
        <end position="131"/>
    </location>
</feature>
<feature type="transmembrane region" description="Helical" evidence="1">
    <location>
        <begin position="176"/>
        <end position="196"/>
    </location>
</feature>
<feature type="transmembrane region" description="Helical" evidence="1">
    <location>
        <begin position="207"/>
        <end position="227"/>
    </location>
</feature>
<feature type="transmembrane region" description="Helical" evidence="1">
    <location>
        <begin position="255"/>
        <end position="275"/>
    </location>
</feature>
<feature type="transmembrane region" description="Helical" evidence="1">
    <location>
        <begin position="291"/>
        <end position="311"/>
    </location>
</feature>
<feature type="transmembrane region" description="Helical" evidence="1">
    <location>
        <begin position="313"/>
        <end position="333"/>
    </location>
</feature>
<feature type="transmembrane region" description="Helical" evidence="1">
    <location>
        <begin position="349"/>
        <end position="369"/>
    </location>
</feature>
<feature type="transmembrane region" description="Helical" evidence="1">
    <location>
        <begin position="380"/>
        <end position="400"/>
    </location>
</feature>
<feature type="transmembrane region" description="Helical" evidence="1">
    <location>
        <begin position="408"/>
        <end position="428"/>
    </location>
</feature>
<proteinExistence type="inferred from homology"/>
<organism>
    <name type="scientific">Klebsiella pneumoniae subsp. pneumoniae (strain ATCC 700721 / MGH 78578)</name>
    <dbReference type="NCBI Taxonomy" id="272620"/>
    <lineage>
        <taxon>Bacteria</taxon>
        <taxon>Pseudomonadati</taxon>
        <taxon>Pseudomonadota</taxon>
        <taxon>Gammaproteobacteria</taxon>
        <taxon>Enterobacterales</taxon>
        <taxon>Enterobacteriaceae</taxon>
        <taxon>Klebsiella/Raoultella group</taxon>
        <taxon>Klebsiella</taxon>
        <taxon>Klebsiella pneumoniae complex</taxon>
    </lineage>
</organism>